<comment type="function">
    <text evidence="15">Together with KRT19, helps to link the contractile apparatus to dystrophin at the costameres of striated muscle.</text>
</comment>
<comment type="subunit">
    <text evidence="1 5 6 7 13 15 16 18 19 22">Heterotetramer of two type I and two type II keratins (PubMed:16000376). Forms a heterodimer with KRT18 (PubMed:10852826, PubMed:24940650). Associates with KRT20 (PubMed:10973561, PubMed:16608857). Interacts with PLEC isoform 1C, when in a heterodimer with KRT18 (PubMed:24940650). Interacts with PNN (PubMed:10809736). When associated with KRT19, interacts with DMD. Interacts with TCHP (PubMed:15731013). Interacts with APEX1 (PubMed:19188445). Interacts with GPER1 (PubMed:21149639). Interacts with EPPK1 (By similarity). Interacts with PKP1 and PKP2 (PubMed:10852826).</text>
</comment>
<comment type="subunit">
    <text evidence="14">(Microbial infection) Interacts with hepatitis C virus/HCV core protein.</text>
</comment>
<comment type="interaction">
    <interactant intactId="EBI-297852">
        <id>P05787</id>
    </interactant>
    <interactant intactId="EBI-11752486">
        <id>Q86XR8-3</id>
        <label>CEP57</label>
    </interactant>
    <organismsDiffer>false</organismsDiffer>
    <experiments>3</experiments>
</comment>
<comment type="interaction">
    <interactant intactId="EBI-297852">
        <id>P05787</id>
    </interactant>
    <interactant intactId="EBI-349854">
        <id>P13569</id>
        <label>CFTR</label>
    </interactant>
    <organismsDiffer>false</organismsDiffer>
    <experiments>11</experiments>
</comment>
<comment type="interaction">
    <interactant intactId="EBI-297852">
        <id>P05787</id>
    </interactant>
    <interactant intactId="EBI-401755">
        <id>P62993</id>
        <label>GRB2</label>
    </interactant>
    <organismsDiffer>false</organismsDiffer>
    <experiments>3</experiments>
</comment>
<comment type="interaction">
    <interactant intactId="EBI-297852">
        <id>P05787</id>
    </interactant>
    <interactant intactId="EBI-81279">
        <id>Q9Y6K9</id>
        <label>IKBKG</label>
    </interactant>
    <organismsDiffer>false</organismsDiffer>
    <experiments>2</experiments>
</comment>
<comment type="interaction">
    <interactant intactId="EBI-297852">
        <id>P05787</id>
    </interactant>
    <interactant intactId="EBI-10171552">
        <id>A1A4E9</id>
        <label>KRT13</label>
    </interactant>
    <organismsDiffer>false</organismsDiffer>
    <experiments>3</experiments>
</comment>
<comment type="interaction">
    <interactant intactId="EBI-297852">
        <id>P05787</id>
    </interactant>
    <interactant intactId="EBI-739566">
        <id>P19012</id>
        <label>KRT15</label>
    </interactant>
    <organismsDiffer>false</organismsDiffer>
    <experiments>6</experiments>
</comment>
<comment type="interaction">
    <interactant intactId="EBI-297852">
        <id>P05787</id>
    </interactant>
    <interactant intactId="EBI-356410">
        <id>P08779</id>
        <label>KRT16</label>
    </interactant>
    <organismsDiffer>false</organismsDiffer>
    <experiments>3</experiments>
</comment>
<comment type="interaction">
    <interactant intactId="EBI-297852">
        <id>P05787</id>
    </interactant>
    <interactant intactId="EBI-297888">
        <id>P05783</id>
        <label>KRT18</label>
    </interactant>
    <organismsDiffer>false</organismsDiffer>
    <experiments>16</experiments>
</comment>
<comment type="interaction">
    <interactant intactId="EBI-297852">
        <id>P05787</id>
    </interactant>
    <interactant intactId="EBI-742756">
        <id>P08727</id>
        <label>KRT19</label>
    </interactant>
    <organismsDiffer>false</organismsDiffer>
    <experiments>3</experiments>
</comment>
<comment type="interaction">
    <interactant intactId="EBI-297852">
        <id>P05787</id>
    </interactant>
    <interactant intactId="EBI-2952736">
        <id>Q2M2I5</id>
        <label>KRT24</label>
    </interactant>
    <organismsDiffer>false</organismsDiffer>
    <experiments>3</experiments>
</comment>
<comment type="interaction">
    <interactant intactId="EBI-297852">
        <id>P05787</id>
    </interactant>
    <interactant intactId="EBI-11980019">
        <id>Q7Z3Z0</id>
        <label>KRT25</label>
    </interactant>
    <organismsDiffer>false</organismsDiffer>
    <experiments>3</experiments>
</comment>
<comment type="interaction">
    <interactant intactId="EBI-297852">
        <id>P05787</id>
    </interactant>
    <interactant intactId="EBI-3044087">
        <id>Q7Z3Y8</id>
        <label>KRT27</label>
    </interactant>
    <organismsDiffer>false</organismsDiffer>
    <experiments>3</experiments>
</comment>
<comment type="interaction">
    <interactant intactId="EBI-297852">
        <id>P05787</id>
    </interactant>
    <interactant intactId="EBI-11980489">
        <id>Q7Z3Y7</id>
        <label>KRT28</label>
    </interactant>
    <organismsDiffer>false</organismsDiffer>
    <experiments>5</experiments>
</comment>
<comment type="interaction">
    <interactant intactId="EBI-297852">
        <id>P05787</id>
    </interactant>
    <interactant intactId="EBI-948001">
        <id>Q15323</id>
        <label>KRT31</label>
    </interactant>
    <organismsDiffer>false</organismsDiffer>
    <experiments>6</experiments>
</comment>
<comment type="interaction">
    <interactant intactId="EBI-297852">
        <id>P05787</id>
    </interactant>
    <interactant intactId="EBI-1049638">
        <id>Q14525</id>
        <label>KRT33B</label>
    </interactant>
    <organismsDiffer>false</organismsDiffer>
    <experiments>5</experiments>
</comment>
<comment type="interaction">
    <interactant intactId="EBI-297852">
        <id>P05787</id>
    </interactant>
    <interactant intactId="EBI-1047093">
        <id>O76011</id>
        <label>KRT34</label>
    </interactant>
    <organismsDiffer>false</organismsDiffer>
    <experiments>3</experiments>
</comment>
<comment type="interaction">
    <interactant intactId="EBI-297852">
        <id>P05787</id>
    </interactant>
    <interactant intactId="EBI-1058674">
        <id>Q92764</id>
        <label>KRT35</label>
    </interactant>
    <organismsDiffer>false</organismsDiffer>
    <experiments>3</experiments>
</comment>
<comment type="interaction">
    <interactant intactId="EBI-297852">
        <id>P05787</id>
    </interactant>
    <interactant intactId="EBI-11958506">
        <id>O76013-2</id>
        <label>KRT36</label>
    </interactant>
    <organismsDiffer>false</organismsDiffer>
    <experiments>3</experiments>
</comment>
<comment type="interaction">
    <interactant intactId="EBI-297852">
        <id>P05787</id>
    </interactant>
    <interactant intactId="EBI-1047263">
        <id>O76015</id>
        <label>KRT38</label>
    </interactant>
    <organismsDiffer>false</organismsDiffer>
    <experiments>7</experiments>
</comment>
<comment type="interaction">
    <interactant intactId="EBI-297852">
        <id>P05787</id>
    </interactant>
    <interactant intactId="EBI-10171697">
        <id>Q6A162</id>
        <label>KRT40</label>
    </interactant>
    <organismsDiffer>false</organismsDiffer>
    <experiments>6</experiments>
</comment>
<comment type="interaction">
    <interactant intactId="EBI-297852">
        <id>P05787</id>
    </interactant>
    <interactant intactId="EBI-2830524">
        <id>O75022</id>
        <label>LILRB3</label>
    </interactant>
    <organismsDiffer>false</organismsDiffer>
    <experiments>3</experiments>
</comment>
<comment type="interaction">
    <interactant intactId="EBI-297852">
        <id>P05787</id>
    </interactant>
    <interactant intactId="EBI-11750983">
        <id>Q9HC98-4</id>
        <label>NEK6</label>
    </interactant>
    <organismsDiffer>false</organismsDiffer>
    <experiments>3</experiments>
</comment>
<comment type="interaction">
    <interactant intactId="EBI-297852">
        <id>P05787</id>
    </interactant>
    <interactant intactId="EBI-9087684">
        <id>Q13835-2</id>
        <label>PKP1</label>
    </interactant>
    <organismsDiffer>false</organismsDiffer>
    <experiments>3</experiments>
</comment>
<comment type="interaction">
    <interactant intactId="EBI-297852">
        <id>P05787</id>
    </interactant>
    <interactant intactId="EBI-1105213">
        <id>Q9UBB9</id>
        <label>TFIP11</label>
    </interactant>
    <organismsDiffer>false</organismsDiffer>
    <experiments>3</experiments>
</comment>
<comment type="interaction">
    <interactant intactId="EBI-297852">
        <id>P05787</id>
    </interactant>
    <interactant intactId="EBI-353844">
        <id>P08670</id>
        <label>VIM</label>
    </interactant>
    <organismsDiffer>false</organismsDiffer>
    <experiments>2</experiments>
</comment>
<comment type="interaction">
    <interactant intactId="EBI-297852">
        <id>P05787</id>
    </interactant>
    <interactant intactId="EBI-9675698">
        <id>P14079</id>
        <label>tax</label>
    </interactant>
    <organismsDiffer>true</organismsDiffer>
    <experiments>3</experiments>
</comment>
<comment type="interaction">
    <interactant intactId="EBI-10194642">
        <id>P05787-2</id>
    </interactant>
    <interactant intactId="EBI-11954292">
        <id>Q86V38</id>
        <label>ATN1</label>
    </interactant>
    <organismsDiffer>false</organismsDiffer>
    <experiments>3</experiments>
</comment>
<comment type="interaction">
    <interactant intactId="EBI-10194642">
        <id>P05787-2</id>
    </interactant>
    <interactant intactId="EBI-10171552">
        <id>A1A4E9</id>
        <label>KRT13</label>
    </interactant>
    <organismsDiffer>false</organismsDiffer>
    <experiments>3</experiments>
</comment>
<comment type="subcellular location">
    <subcellularLocation>
        <location evidence="7 18">Cytoplasm</location>
    </subcellularLocation>
    <subcellularLocation>
        <location evidence="2">Nucleus</location>
        <location evidence="2">Nucleoplasm</location>
    </subcellularLocation>
    <subcellularLocation>
        <location evidence="2">Nucleus matrix</location>
    </subcellularLocation>
</comment>
<comment type="alternative products">
    <event type="alternative splicing"/>
    <isoform>
        <id>P05787-1</id>
        <name>1</name>
        <sequence type="displayed"/>
    </isoform>
    <isoform>
        <id>P05787-2</id>
        <name>2</name>
        <sequence type="described" ref="VSP_046000"/>
    </isoform>
</comment>
<comment type="tissue specificity">
    <text evidence="7 15">Observed in muscle fibers accumulating in the costameres of myoplasm at the sarcolemma membrane in structures that contain dystrophin and spectrin. Expressed in gingival mucosa and hard palate of the oral cavity.</text>
</comment>
<comment type="PTM">
    <text evidence="8 9 11 23">Phosphorylation on serine residues is enhanced during EGF stimulation and mitosis. Ser-74 phosphorylation plays an important role in keratin filament reorganization.</text>
</comment>
<comment type="PTM">
    <text>O-glycosylated. O-GlcNAcylation at multiple sites increases solubility, and decreases stability by inducing proteasomal degradation.</text>
</comment>
<comment type="PTM">
    <text>O-glycosylated (O-GlcNAcylated), in a cell cycle-dependent manner.</text>
</comment>
<comment type="disease" evidence="10">
    <disease id="DI-01454">
        <name>Cirrhosis</name>
        <acronym>CIRRH</acronym>
        <description>A liver disease characterized by severe panlobular liver-cell swelling with Mallory body formation, prominent pericellular fibrosis, and marked deposits of copper. Clinical features include abdomen swelling, jaundice and pulmonary hypertension.</description>
        <dbReference type="MIM" id="215600"/>
    </disease>
    <text>The disease is caused by variants affecting the gene represented in this entry.</text>
</comment>
<comment type="miscellaneous">
    <text>There are two types of cytoskeletal and microfibrillar keratin: I (acidic; 40-55 kDa) and II (neutral to basic; 56-70 kDa).</text>
</comment>
<comment type="similarity">
    <text evidence="3">Belongs to the intermediate filament family.</text>
</comment>
<accession>P05787</accession>
<accession>A8K4H3</accession>
<accession>B0AZN5</accession>
<accession>F8VXB4</accession>
<accession>Q14099</accession>
<accession>Q14716</accession>
<accession>Q14717</accession>
<accession>Q53GJ0</accession>
<accession>Q6DHW5</accession>
<accession>Q6GMY0</accession>
<accession>Q6P4C7</accession>
<accession>Q96J60</accession>
<dbReference type="EMBL" id="M34482">
    <property type="protein sequence ID" value="AAA35763.1"/>
    <property type="molecule type" value="Genomic_DNA"/>
</dbReference>
<dbReference type="EMBL" id="M34225">
    <property type="protein sequence ID" value="AAA35748.1"/>
    <property type="molecule type" value="mRNA"/>
</dbReference>
<dbReference type="EMBL" id="X74929">
    <property type="protein sequence ID" value="CAA52882.1"/>
    <property type="molecule type" value="mRNA"/>
</dbReference>
<dbReference type="EMBL" id="X74981">
    <property type="protein sequence ID" value="CAA52916.1"/>
    <property type="molecule type" value="Genomic_DNA"/>
</dbReference>
<dbReference type="EMBL" id="U76549">
    <property type="protein sequence ID" value="AAB18966.1"/>
    <property type="molecule type" value="mRNA"/>
</dbReference>
<dbReference type="EMBL" id="AK290938">
    <property type="protein sequence ID" value="BAF83627.1"/>
    <property type="molecule type" value="mRNA"/>
</dbReference>
<dbReference type="EMBL" id="AK310257">
    <property type="status" value="NOT_ANNOTATED_CDS"/>
    <property type="molecule type" value="mRNA"/>
</dbReference>
<dbReference type="EMBL" id="AK315826">
    <property type="protein sequence ID" value="BAF98717.1"/>
    <property type="molecule type" value="mRNA"/>
</dbReference>
<dbReference type="EMBL" id="AK222941">
    <property type="protein sequence ID" value="BAD96661.1"/>
    <property type="molecule type" value="mRNA"/>
</dbReference>
<dbReference type="EMBL" id="AC107016">
    <property type="status" value="NOT_ANNOTATED_CDS"/>
    <property type="molecule type" value="Genomic_DNA"/>
</dbReference>
<dbReference type="EMBL" id="CH471054">
    <property type="protein sequence ID" value="EAW96653.1"/>
    <property type="molecule type" value="Genomic_DNA"/>
</dbReference>
<dbReference type="EMBL" id="BC000654">
    <property type="protein sequence ID" value="AAH00654.3"/>
    <property type="molecule type" value="mRNA"/>
</dbReference>
<dbReference type="EMBL" id="BC063513">
    <property type="protein sequence ID" value="AAH63513.2"/>
    <property type="molecule type" value="mRNA"/>
</dbReference>
<dbReference type="EMBL" id="BC073760">
    <property type="protein sequence ID" value="AAH73760.1"/>
    <property type="molecule type" value="mRNA"/>
</dbReference>
<dbReference type="EMBL" id="BC075839">
    <property type="protein sequence ID" value="AAH75839.1"/>
    <property type="molecule type" value="mRNA"/>
</dbReference>
<dbReference type="EMBL" id="M26512">
    <property type="protein sequence ID" value="AAA51542.1"/>
    <property type="molecule type" value="mRNA"/>
</dbReference>
<dbReference type="EMBL" id="X12882">
    <property type="protein sequence ID" value="CAA31376.1"/>
    <property type="molecule type" value="mRNA"/>
</dbReference>
<dbReference type="EMBL" id="X98614">
    <property type="protein sequence ID" value="CAA67203.1"/>
    <property type="molecule type" value="mRNA"/>
</dbReference>
<dbReference type="CCDS" id="CCDS58234.1">
    <molecule id="P05787-2"/>
</dbReference>
<dbReference type="CCDS" id="CCDS8841.1">
    <molecule id="P05787-1"/>
</dbReference>
<dbReference type="PIR" id="A34720">
    <property type="entry name" value="A34720"/>
</dbReference>
<dbReference type="RefSeq" id="NP_001243211.1">
    <molecule id="P05787-2"/>
    <property type="nucleotide sequence ID" value="NM_001256282.2"/>
</dbReference>
<dbReference type="RefSeq" id="NP_001243222.1">
    <molecule id="P05787-1"/>
    <property type="nucleotide sequence ID" value="NM_001256293.2"/>
</dbReference>
<dbReference type="RefSeq" id="NP_002264.1">
    <molecule id="P05787-1"/>
    <property type="nucleotide sequence ID" value="NM_002273.4"/>
</dbReference>
<dbReference type="PDB" id="7K3C">
    <property type="method" value="X-ray"/>
    <property type="resolution" value="1.10 A"/>
    <property type="chains" value="A/B=58-64"/>
</dbReference>
<dbReference type="PDB" id="7K3X">
    <property type="method" value="X-ray"/>
    <property type="resolution" value="1.71 A"/>
    <property type="chains" value="A=58-64"/>
</dbReference>
<dbReference type="PDB" id="7K3Y">
    <property type="method" value="X-ray"/>
    <property type="resolution" value="1.10 A"/>
    <property type="chains" value="A/B=52-58"/>
</dbReference>
<dbReference type="PDBsum" id="7K3C"/>
<dbReference type="PDBsum" id="7K3X"/>
<dbReference type="PDBsum" id="7K3Y"/>
<dbReference type="SMR" id="P05787"/>
<dbReference type="BioGRID" id="110054">
    <property type="interactions" value="449"/>
</dbReference>
<dbReference type="ComplexPortal" id="CPX-5661">
    <property type="entry name" value="Keratin-8 - Keratin-18 dimer complex"/>
</dbReference>
<dbReference type="DIP" id="DIP-424N"/>
<dbReference type="ELM" id="P05787"/>
<dbReference type="FunCoup" id="P05787">
    <property type="interactions" value="637"/>
</dbReference>
<dbReference type="IntAct" id="P05787">
    <property type="interactions" value="111"/>
</dbReference>
<dbReference type="MINT" id="P05787"/>
<dbReference type="STRING" id="9606.ENSP00000449404"/>
<dbReference type="DrugBank" id="DB09130">
    <property type="generic name" value="Copper"/>
</dbReference>
<dbReference type="DrugBank" id="DB06245">
    <property type="generic name" value="Lanoteplase"/>
</dbReference>
<dbReference type="GlyConnect" id="313">
    <property type="glycosylation" value="2 N-Linked glycans (1 site), 1 O-GlcNAc glycan (2 sites)"/>
</dbReference>
<dbReference type="GlyCosmos" id="P05787">
    <property type="glycosylation" value="7 sites, 3 glycans"/>
</dbReference>
<dbReference type="GlyGen" id="P05787">
    <property type="glycosylation" value="22 sites, 3 N-linked glycans (2 sites), 1 O-linked glycan (18 sites)"/>
</dbReference>
<dbReference type="iPTMnet" id="P05787"/>
<dbReference type="MetOSite" id="P05787"/>
<dbReference type="PhosphoSitePlus" id="P05787"/>
<dbReference type="SwissPalm" id="P05787"/>
<dbReference type="BioMuta" id="KRT8"/>
<dbReference type="DMDM" id="90110027"/>
<dbReference type="CPTAC" id="CPTAC-1524"/>
<dbReference type="CPTAC" id="CPTAC-1525"/>
<dbReference type="CPTAC" id="CPTAC-5838"/>
<dbReference type="CPTAC" id="CPTAC-5863"/>
<dbReference type="jPOST" id="P05787"/>
<dbReference type="MassIVE" id="P05787"/>
<dbReference type="PaxDb" id="9606-ENSP00000449404"/>
<dbReference type="PeptideAtlas" id="P05787"/>
<dbReference type="PRIDE" id="P05787"/>
<dbReference type="ProteomicsDB" id="29093"/>
<dbReference type="ProteomicsDB" id="51858">
    <molecule id="P05787-1"/>
</dbReference>
<dbReference type="TopDownProteomics" id="P05787-1">
    <molecule id="P05787-1"/>
</dbReference>
<dbReference type="TopDownProteomics" id="P05787-2">
    <molecule id="P05787-2"/>
</dbReference>
<dbReference type="ABCD" id="P05787">
    <property type="antibodies" value="2 sequenced antibodies"/>
</dbReference>
<dbReference type="Antibodypedia" id="3437">
    <property type="antibodies" value="3647 antibodies from 53 providers"/>
</dbReference>
<dbReference type="DNASU" id="3856"/>
<dbReference type="Ensembl" id="ENST00000293308.11">
    <molecule id="P05787-1"/>
    <property type="protein sequence ID" value="ENSP00000293308.6"/>
    <property type="gene ID" value="ENSG00000170421.13"/>
</dbReference>
<dbReference type="Ensembl" id="ENST00000546897.5">
    <molecule id="P05787-1"/>
    <property type="protein sequence ID" value="ENSP00000447402.1"/>
    <property type="gene ID" value="ENSG00000170421.13"/>
</dbReference>
<dbReference type="Ensembl" id="ENST00000552150.5">
    <molecule id="P05787-2"/>
    <property type="protein sequence ID" value="ENSP00000449404.1"/>
    <property type="gene ID" value="ENSG00000170421.13"/>
</dbReference>
<dbReference type="Ensembl" id="ENST00000552551.5">
    <molecule id="P05787-1"/>
    <property type="protein sequence ID" value="ENSP00000447566.1"/>
    <property type="gene ID" value="ENSG00000170421.13"/>
</dbReference>
<dbReference type="Ensembl" id="ENST00000692008.1">
    <molecule id="P05787-1"/>
    <property type="protein sequence ID" value="ENSP00000509398.1"/>
    <property type="gene ID" value="ENSG00000170421.13"/>
</dbReference>
<dbReference type="GeneID" id="3856"/>
<dbReference type="KEGG" id="hsa:3856"/>
<dbReference type="MANE-Select" id="ENST00000692008.1">
    <property type="protein sequence ID" value="ENSP00000509398.1"/>
    <property type="RefSeq nucleotide sequence ID" value="NM_002273.4"/>
    <property type="RefSeq protein sequence ID" value="NP_002264.1"/>
</dbReference>
<dbReference type="UCSC" id="uc001sbd.3">
    <molecule id="P05787-1"/>
    <property type="organism name" value="human"/>
</dbReference>
<dbReference type="AGR" id="HGNC:6446"/>
<dbReference type="CTD" id="3856"/>
<dbReference type="DisGeNET" id="3856"/>
<dbReference type="GeneCards" id="KRT8"/>
<dbReference type="HGNC" id="HGNC:6446">
    <property type="gene designation" value="KRT8"/>
</dbReference>
<dbReference type="HPA" id="ENSG00000170421">
    <property type="expression patterns" value="Tissue enhanced (intestine, stomach)"/>
</dbReference>
<dbReference type="MalaCards" id="KRT8"/>
<dbReference type="MIM" id="148060">
    <property type="type" value="gene"/>
</dbReference>
<dbReference type="MIM" id="215600">
    <property type="type" value="phenotype"/>
</dbReference>
<dbReference type="neXtProt" id="NX_P05787"/>
<dbReference type="OpenTargets" id="ENSG00000170421"/>
<dbReference type="PharmGKB" id="PA30234"/>
<dbReference type="VEuPathDB" id="HostDB:ENSG00000170421"/>
<dbReference type="eggNOG" id="ENOG502QURK">
    <property type="taxonomic scope" value="Eukaryota"/>
</dbReference>
<dbReference type="GeneTree" id="ENSGT00940000153339"/>
<dbReference type="InParanoid" id="P05787"/>
<dbReference type="OMA" id="EMTRNIN"/>
<dbReference type="OrthoDB" id="9538053at2759"/>
<dbReference type="PAN-GO" id="P05787">
    <property type="GO annotations" value="4 GO annotations based on evolutionary models"/>
</dbReference>
<dbReference type="PhylomeDB" id="P05787"/>
<dbReference type="TreeFam" id="TF317854"/>
<dbReference type="PathwayCommons" id="P05787"/>
<dbReference type="Reactome" id="R-HSA-6805567">
    <property type="pathway name" value="Keratinization"/>
</dbReference>
<dbReference type="Reactome" id="R-HSA-6809371">
    <property type="pathway name" value="Formation of the cornified envelope"/>
</dbReference>
<dbReference type="SignaLink" id="P05787"/>
<dbReference type="SIGNOR" id="P05787"/>
<dbReference type="BioGRID-ORCS" id="3856">
    <property type="hits" value="192 hits in 1099 CRISPR screens"/>
</dbReference>
<dbReference type="CD-CODE" id="91857CE7">
    <property type="entry name" value="Nucleolus"/>
</dbReference>
<dbReference type="ChiTaRS" id="KRT8">
    <property type="organism name" value="human"/>
</dbReference>
<dbReference type="GeneWiki" id="Keratin_8"/>
<dbReference type="GenomeRNAi" id="3856"/>
<dbReference type="Pharos" id="P05787">
    <property type="development level" value="Tbio"/>
</dbReference>
<dbReference type="PRO" id="PR:P05787"/>
<dbReference type="Proteomes" id="UP000005640">
    <property type="component" value="Chromosome 12"/>
</dbReference>
<dbReference type="RNAct" id="P05787">
    <property type="molecule type" value="protein"/>
</dbReference>
<dbReference type="Bgee" id="ENSG00000170421">
    <property type="expression patterns" value="Expressed in mucosa of transverse colon and 117 other cell types or tissues"/>
</dbReference>
<dbReference type="ExpressionAtlas" id="P05787">
    <property type="expression patterns" value="baseline and differential"/>
</dbReference>
<dbReference type="GO" id="GO:0016327">
    <property type="term" value="C:apicolateral plasma membrane"/>
    <property type="evidence" value="ECO:0007669"/>
    <property type="project" value="Ensembl"/>
</dbReference>
<dbReference type="GO" id="GO:0005911">
    <property type="term" value="C:cell-cell junction"/>
    <property type="evidence" value="ECO:0007669"/>
    <property type="project" value="Ensembl"/>
</dbReference>
<dbReference type="GO" id="GO:0005737">
    <property type="term" value="C:cytoplasm"/>
    <property type="evidence" value="ECO:0000314"/>
    <property type="project" value="UniProtKB"/>
</dbReference>
<dbReference type="GO" id="GO:0005829">
    <property type="term" value="C:cytosol"/>
    <property type="evidence" value="ECO:0000304"/>
    <property type="project" value="Reactome"/>
</dbReference>
<dbReference type="GO" id="GO:0070062">
    <property type="term" value="C:extracellular exosome"/>
    <property type="evidence" value="ECO:0007005"/>
    <property type="project" value="UniProtKB"/>
</dbReference>
<dbReference type="GO" id="GO:0005882">
    <property type="term" value="C:intermediate filament"/>
    <property type="evidence" value="ECO:0000314"/>
    <property type="project" value="BHF-UCL"/>
</dbReference>
<dbReference type="GO" id="GO:0045111">
    <property type="term" value="C:intermediate filament cytoskeleton"/>
    <property type="evidence" value="ECO:0000314"/>
    <property type="project" value="HPA"/>
</dbReference>
<dbReference type="GO" id="GO:0045095">
    <property type="term" value="C:keratin filament"/>
    <property type="evidence" value="ECO:0000353"/>
    <property type="project" value="ComplexPortal"/>
</dbReference>
<dbReference type="GO" id="GO:0016363">
    <property type="term" value="C:nuclear matrix"/>
    <property type="evidence" value="ECO:0007669"/>
    <property type="project" value="UniProtKB-SubCell"/>
</dbReference>
<dbReference type="GO" id="GO:0005654">
    <property type="term" value="C:nucleoplasm"/>
    <property type="evidence" value="ECO:0007669"/>
    <property type="project" value="UniProtKB-SubCell"/>
</dbReference>
<dbReference type="GO" id="GO:0005634">
    <property type="term" value="C:nucleus"/>
    <property type="evidence" value="ECO:0007005"/>
    <property type="project" value="UniProtKB"/>
</dbReference>
<dbReference type="GO" id="GO:0042383">
    <property type="term" value="C:sarcolemma"/>
    <property type="evidence" value="ECO:0007669"/>
    <property type="project" value="Ensembl"/>
</dbReference>
<dbReference type="GO" id="GO:0030018">
    <property type="term" value="C:Z disc"/>
    <property type="evidence" value="ECO:0007669"/>
    <property type="project" value="Ensembl"/>
</dbReference>
<dbReference type="GO" id="GO:0097110">
    <property type="term" value="F:scaffold protein binding"/>
    <property type="evidence" value="ECO:0000353"/>
    <property type="project" value="BHF-UCL"/>
</dbReference>
<dbReference type="GO" id="GO:0060706">
    <property type="term" value="P:cell differentiation involved in embryonic placenta development"/>
    <property type="evidence" value="ECO:0007669"/>
    <property type="project" value="Ensembl"/>
</dbReference>
<dbReference type="GO" id="GO:0097191">
    <property type="term" value="P:extrinsic apoptotic signaling pathway"/>
    <property type="evidence" value="ECO:0007669"/>
    <property type="project" value="Ensembl"/>
</dbReference>
<dbReference type="GO" id="GO:0097284">
    <property type="term" value="P:hepatocyte apoptotic process"/>
    <property type="evidence" value="ECO:0007669"/>
    <property type="project" value="Ensembl"/>
</dbReference>
<dbReference type="GO" id="GO:0051707">
    <property type="term" value="P:response to other organism"/>
    <property type="evidence" value="ECO:0007669"/>
    <property type="project" value="Ensembl"/>
</dbReference>
<dbReference type="GO" id="GO:0033209">
    <property type="term" value="P:tumor necrosis factor-mediated signaling pathway"/>
    <property type="evidence" value="ECO:0007669"/>
    <property type="project" value="Ensembl"/>
</dbReference>
<dbReference type="FunFam" id="1.20.5.1160:FF:000001">
    <property type="entry name" value="Keratin type II"/>
    <property type="match status" value="1"/>
</dbReference>
<dbReference type="FunFam" id="1.20.5.170:FF:000004">
    <property type="entry name" value="Keratin, type II cytoskeletal 5"/>
    <property type="match status" value="1"/>
</dbReference>
<dbReference type="FunFam" id="1.20.5.500:FF:000001">
    <property type="entry name" value="Type II keratin 23"/>
    <property type="match status" value="1"/>
</dbReference>
<dbReference type="Gene3D" id="1.20.5.170">
    <property type="match status" value="1"/>
</dbReference>
<dbReference type="Gene3D" id="1.20.5.500">
    <property type="entry name" value="Single helix bin"/>
    <property type="match status" value="1"/>
</dbReference>
<dbReference type="Gene3D" id="1.20.5.1160">
    <property type="entry name" value="Vasodilator-stimulated phosphoprotein"/>
    <property type="match status" value="1"/>
</dbReference>
<dbReference type="InterPro" id="IPR018039">
    <property type="entry name" value="IF_conserved"/>
</dbReference>
<dbReference type="InterPro" id="IPR039008">
    <property type="entry name" value="IF_rod_dom"/>
</dbReference>
<dbReference type="InterPro" id="IPR032444">
    <property type="entry name" value="Keratin_2_head"/>
</dbReference>
<dbReference type="InterPro" id="IPR003054">
    <property type="entry name" value="Keratin_II"/>
</dbReference>
<dbReference type="PANTHER" id="PTHR45616">
    <property type="entry name" value="GATA-TYPE DOMAIN-CONTAINING PROTEIN"/>
    <property type="match status" value="1"/>
</dbReference>
<dbReference type="PANTHER" id="PTHR45616:SF26">
    <property type="entry name" value="KERATIN, TYPE II CYTOSKELETAL 8"/>
    <property type="match status" value="1"/>
</dbReference>
<dbReference type="Pfam" id="PF00038">
    <property type="entry name" value="Filament"/>
    <property type="match status" value="1"/>
</dbReference>
<dbReference type="Pfam" id="PF16208">
    <property type="entry name" value="Keratin_2_head"/>
    <property type="match status" value="1"/>
</dbReference>
<dbReference type="PRINTS" id="PR01276">
    <property type="entry name" value="TYPE2KERATIN"/>
</dbReference>
<dbReference type="SMART" id="SM01391">
    <property type="entry name" value="Filament"/>
    <property type="match status" value="1"/>
</dbReference>
<dbReference type="SUPFAM" id="SSF64593">
    <property type="entry name" value="Intermediate filament protein, coiled coil region"/>
    <property type="match status" value="3"/>
</dbReference>
<dbReference type="SUPFAM" id="SSF46579">
    <property type="entry name" value="Prefoldin"/>
    <property type="match status" value="1"/>
</dbReference>
<dbReference type="PROSITE" id="PS00226">
    <property type="entry name" value="IF_ROD_1"/>
    <property type="match status" value="1"/>
</dbReference>
<dbReference type="PROSITE" id="PS51842">
    <property type="entry name" value="IF_ROD_2"/>
    <property type="match status" value="1"/>
</dbReference>
<feature type="chain" id="PRO_0000063740" description="Keratin, type II cytoskeletal 8">
    <location>
        <begin position="1"/>
        <end position="483"/>
    </location>
</feature>
<feature type="domain" description="IF rod" evidence="3">
    <location>
        <begin position="91"/>
        <end position="402"/>
    </location>
</feature>
<feature type="region of interest" description="Head">
    <location>
        <begin position="1"/>
        <end position="90"/>
    </location>
</feature>
<feature type="region of interest" description="Disordered" evidence="4">
    <location>
        <begin position="1"/>
        <end position="41"/>
    </location>
</feature>
<feature type="region of interest" description="Coil 1A">
    <location>
        <begin position="91"/>
        <end position="126"/>
    </location>
</feature>
<feature type="region of interest" description="Linker 1">
    <location>
        <begin position="127"/>
        <end position="143"/>
    </location>
</feature>
<feature type="region of interest" description="Coil 1B">
    <location>
        <begin position="144"/>
        <end position="235"/>
    </location>
</feature>
<feature type="region of interest" description="Linker 12">
    <location>
        <begin position="236"/>
        <end position="259"/>
    </location>
</feature>
<feature type="region of interest" description="Coil 2">
    <location>
        <begin position="260"/>
        <end position="398"/>
    </location>
</feature>
<feature type="region of interest" description="Necessary for interaction with PNN" evidence="5">
    <location>
        <begin position="261"/>
        <end position="382"/>
    </location>
</feature>
<feature type="region of interest" description="Tail">
    <location>
        <begin position="399"/>
        <end position="483"/>
    </location>
</feature>
<feature type="compositionally biased region" description="Polar residues" evidence="4">
    <location>
        <begin position="1"/>
        <end position="16"/>
    </location>
</feature>
<feature type="compositionally biased region" description="Low complexity" evidence="4">
    <location>
        <begin position="24"/>
        <end position="41"/>
    </location>
</feature>
<feature type="site" description="Stutter">
    <location>
        <position position="342"/>
    </location>
</feature>
<feature type="modified residue" description="Phosphoserine; by PKC/PRKCE" evidence="11">
    <location>
        <position position="9"/>
    </location>
</feature>
<feature type="modified residue" description="Phosphoserine" evidence="33">
    <location>
        <position position="13"/>
    </location>
</feature>
<feature type="modified residue" description="Phosphoserine" evidence="35">
    <location>
        <position position="15"/>
    </location>
</feature>
<feature type="modified residue" description="Phosphoserine" evidence="27 33">
    <location>
        <position position="21"/>
    </location>
</feature>
<feature type="modified residue" description="Phosphoserine" evidence="35">
    <location>
        <position position="22"/>
    </location>
</feature>
<feature type="modified residue" description="Omega-N-methylarginine" evidence="34">
    <location>
        <position position="23"/>
    </location>
</feature>
<feature type="modified residue" description="Phosphoserine; by PKC/PRKCE" evidence="11 23 27 32">
    <location>
        <position position="24"/>
    </location>
</feature>
<feature type="modified residue" description="Phosphothreonine" evidence="2">
    <location>
        <position position="26"/>
    </location>
</feature>
<feature type="modified residue" description="Phosphoserine" evidence="27">
    <location>
        <position position="27"/>
    </location>
</feature>
<feature type="modified residue" description="Phosphoserine" evidence="33">
    <location>
        <position position="31"/>
    </location>
</feature>
<feature type="modified residue" description="Omega-N-methylarginine" evidence="34">
    <location>
        <position position="32"/>
    </location>
</feature>
<feature type="modified residue" description="Phosphoserine" evidence="33">
    <location>
        <position position="34"/>
    </location>
</feature>
<feature type="modified residue" description="Phosphoserine" evidence="2">
    <location>
        <position position="37"/>
    </location>
</feature>
<feature type="modified residue" description="Phosphoserine" evidence="33">
    <location>
        <position position="39"/>
    </location>
</feature>
<feature type="modified residue" description="Omega-N-methylarginine" evidence="34">
    <location>
        <position position="40"/>
    </location>
</feature>
<feature type="modified residue" description="Phosphoserine" evidence="27 32 33">
    <location>
        <position position="43"/>
    </location>
</feature>
<feature type="modified residue" description="Phosphoserine" evidence="2">
    <location>
        <position position="44"/>
    </location>
</feature>
<feature type="modified residue" description="Asymmetric dimethylarginine; alternate" evidence="34">
    <location>
        <position position="47"/>
    </location>
</feature>
<feature type="modified residue" description="Omega-N-methylarginine; alternate" evidence="34">
    <location>
        <position position="47"/>
    </location>
</feature>
<feature type="modified residue" description="Phosphoserine; by MAPK" evidence="8 9">
    <location>
        <position position="74"/>
    </location>
</feature>
<feature type="modified residue" description="N6-malonyllysine" evidence="20">
    <location>
        <position position="101"/>
    </location>
</feature>
<feature type="modified residue" description="N6-acetyllysine" evidence="30">
    <location>
        <position position="207"/>
    </location>
</feature>
<feature type="modified residue" description="Phosphotyrosine" evidence="31">
    <location>
        <position position="228"/>
    </location>
</feature>
<feature type="modified residue" description="Phosphoserine" evidence="26 27 28 29 32 33 35">
    <location>
        <position position="253"/>
    </location>
</feature>
<feature type="modified residue" description="Phosphoserine" evidence="27 28 32 33 35">
    <location>
        <position position="258"/>
    </location>
</feature>
<feature type="modified residue" description="Phosphoserine" evidence="27 33">
    <location>
        <position position="274"/>
    </location>
</feature>
<feature type="modified residue" description="Phosphoserine" evidence="33">
    <location>
        <position position="291"/>
    </location>
</feature>
<feature type="modified residue" description="N6-acetyllysine; alternate" evidence="30">
    <location>
        <position position="295"/>
    </location>
</feature>
<feature type="modified residue" description="N6-acetyllysine; alternate" evidence="30">
    <location>
        <position position="325"/>
    </location>
</feature>
<feature type="modified residue" description="Phosphoserine" evidence="26 33">
    <location>
        <position position="330"/>
    </location>
</feature>
<feature type="modified residue" description="Phosphoserine" evidence="27">
    <location>
        <position position="400"/>
    </location>
</feature>
<feature type="modified residue" description="Phosphoserine" evidence="33">
    <location>
        <position position="404"/>
    </location>
</feature>
<feature type="modified residue" description="Phosphoserine" evidence="27 33 35">
    <location>
        <position position="410"/>
    </location>
</feature>
<feature type="modified residue" description="Phosphoserine" evidence="2">
    <location>
        <position position="417"/>
    </location>
</feature>
<feature type="modified residue" description="Phosphoserine" evidence="2">
    <location>
        <position position="424"/>
    </location>
</feature>
<feature type="modified residue" description="Phosphoserine; by CaMK2 and MAPK" evidence="23 27">
    <location>
        <position position="432"/>
    </location>
</feature>
<feature type="modified residue" description="Phosphoserine" evidence="27 31 33 35">
    <location>
        <position position="475"/>
    </location>
</feature>
<feature type="modified residue" description="Phosphoserine" evidence="33">
    <location>
        <position position="477"/>
    </location>
</feature>
<feature type="modified residue" description="Phosphoserine" evidence="27 31">
    <location>
        <position position="478"/>
    </location>
</feature>
<feature type="cross-link" description="Glycyl lysine isopeptide (Lys-Gly) (interchain with G-Cter in SUMO2)" evidence="38">
    <location>
        <position position="11"/>
    </location>
</feature>
<feature type="cross-link" description="Glycyl lysine isopeptide (Lys-Gly) (interchain with G-Cter in SUMO2)" evidence="38">
    <location>
        <position position="122"/>
    </location>
</feature>
<feature type="cross-link" description="Glycyl lysine isopeptide (Lys-Gly) (interchain with G-Cter in SUMO2)" evidence="38">
    <location>
        <position position="130"/>
    </location>
</feature>
<feature type="cross-link" description="Glycyl lysine isopeptide (Lys-Gly) (interchain with G-Cter in SUMO1); alternate" evidence="36">
    <location>
        <position position="197"/>
    </location>
</feature>
<feature type="cross-link" description="Glycyl lysine isopeptide (Lys-Gly) (interchain with G-Cter in SUMO2); alternate" evidence="36 38">
    <location>
        <position position="197"/>
    </location>
</feature>
<feature type="cross-link" description="Glycyl lysine isopeptide (Lys-Gly) (interchain with G-Cter in SUMO2)" evidence="38">
    <location>
        <position position="264"/>
    </location>
</feature>
<feature type="cross-link" description="Glycyl lysine isopeptide (Lys-Gly) (interchain with G-Cter in SUMO2)" evidence="36 37 38">
    <location>
        <position position="285"/>
    </location>
</feature>
<feature type="cross-link" description="Glycyl lysine isopeptide (Lys-Gly) (interchain with G-Cter in SUMO2); alternate" evidence="38">
    <location>
        <position position="295"/>
    </location>
</feature>
<feature type="cross-link" description="Glycyl lysine isopeptide (Lys-Gly) (interchain with G-Cter in SUMO2)" evidence="37 38">
    <location>
        <position position="304"/>
    </location>
</feature>
<feature type="cross-link" description="Glycyl lysine isopeptide (Lys-Gly) (interchain with G-Cter in SUMO2); alternate" evidence="38">
    <location>
        <position position="325"/>
    </location>
</feature>
<feature type="cross-link" description="Glycyl lysine isopeptide (Lys-Gly) (interchain with G-Cter in SUMO2)" evidence="38">
    <location>
        <position position="393"/>
    </location>
</feature>
<feature type="cross-link" description="Glycyl lysine isopeptide (Lys-Gly) (interchain with G-Cter in SUMO1); alternate" evidence="36">
    <location>
        <position position="472"/>
    </location>
</feature>
<feature type="cross-link" description="Glycyl lysine isopeptide (Lys-Gly) (interchain with G-Cter in SUMO2); alternate" evidence="36 37 38">
    <location>
        <position position="472"/>
    </location>
</feature>
<feature type="splice variant" id="VSP_046000" description="In isoform 2." evidence="24">
    <original>M</original>
    <variation>MNGVSWSQDLQEGISAWFGPPASTPASTM</variation>
    <location>
        <position position="1"/>
    </location>
</feature>
<feature type="sequence variant" id="VAR_023058" description="In CIRRH; dbSNP:rs61710484." evidence="10">
    <original>G</original>
    <variation>V</variation>
    <location>
        <position position="53"/>
    </location>
</feature>
<feature type="sequence variant" id="VAR_023059" description="In CIRRH." evidence="10">
    <original>Y</original>
    <variation>C</variation>
    <location>
        <position position="54"/>
    </location>
</feature>
<feature type="sequence variant" id="VAR_023060" description="In CIRRH; dbSNP:rs11554495." evidence="10 12">
    <original>G</original>
    <variation>C</variation>
    <location>
        <position position="62"/>
    </location>
</feature>
<feature type="sequence variant" id="VAR_023061" description="In dbSNP:rs59536457." evidence="10">
    <original>I</original>
    <variation>V</variation>
    <location>
        <position position="63"/>
    </location>
</feature>
<feature type="sequence variant" id="VAR_049805" description="In dbSNP:rs2277330.">
    <original>R</original>
    <variation>W</variation>
    <location>
        <position position="401"/>
    </location>
</feature>
<feature type="sequence variant" id="VAR_069106" evidence="17 21">
    <original>S</original>
    <variation>G</variation>
    <location>
        <position position="417"/>
    </location>
</feature>
<feature type="sequence variant" id="VAR_069107" description="In dbSNP:rs1065648." evidence="21">
    <original>G</original>
    <variation>D</variation>
    <location>
        <position position="429"/>
    </location>
</feature>
<feature type="mutagenesis site" description="Increases phosphorylation." evidence="9">
    <original>L</original>
    <variation>P</variation>
    <location>
        <position position="72"/>
    </location>
</feature>
<feature type="mutagenesis site" description="Generates normal-appearing filaments, that remain stable after okadaic acid treatment." evidence="9">
    <original>S</original>
    <variation>A</variation>
    <location>
        <position position="74"/>
    </location>
</feature>
<feature type="mutagenesis site" description="Generates normal-appearing filaments, that are destabilized by okadaic acid." evidence="9">
    <original>S</original>
    <variation>D</variation>
    <location>
        <position position="74"/>
    </location>
</feature>
<feature type="sequence conflict" description="In Ref. 5; BAF83627." evidence="25" ref="5">
    <original>G</original>
    <variation>V</variation>
    <location>
        <position position="56"/>
    </location>
</feature>
<feature type="sequence conflict" description="In Ref. 2; AAA35748." evidence="25" ref="2">
    <original>V</original>
    <variation>S</variation>
    <location>
        <position position="77"/>
    </location>
</feature>
<feature type="sequence conflict" description="In Ref. 3; CAA52882." evidence="25" ref="3">
    <original>D</original>
    <variation>DVD</variation>
    <location>
        <position position="201"/>
    </location>
</feature>
<feature type="sequence conflict" description="In Ref. 11; CAA67203." evidence="25" ref="11">
    <original>I</original>
    <variation>L</variation>
    <location>
        <position position="232"/>
    </location>
</feature>
<feature type="sequence conflict" description="In Ref. 2; AAA35748." evidence="25" ref="2">
    <original>D</original>
    <variation>E</variation>
    <location>
        <position position="257"/>
    </location>
</feature>
<feature type="sequence conflict" description="In Ref. 11; CAA31376." evidence="25" ref="11">
    <original>M</original>
    <variation>I</variation>
    <location>
        <position position="310"/>
    </location>
</feature>
<feature type="sequence conflict" description="In Ref. 6; BAD96661." evidence="25" ref="6">
    <original>L</original>
    <variation>F</variation>
    <location>
        <position position="324"/>
    </location>
</feature>
<feature type="sequence conflict" description="In Ref. 11; CAA67203." evidence="25" ref="11">
    <original>L</original>
    <variation>M</variation>
    <location>
        <position position="384"/>
    </location>
</feature>
<feature type="sequence conflict" description="In Ref. 2; AAA35748." evidence="25" ref="2">
    <original>E</original>
    <variation>D</variation>
    <location>
        <position position="387"/>
    </location>
</feature>
<feature type="sequence conflict" description="In Ref. 2; AAA35748." evidence="25" ref="2">
    <original>R</original>
    <variation>P</variation>
    <location>
        <position position="401"/>
    </location>
</feature>
<feature type="sequence conflict" description="In Ref. 1; AAA35763." evidence="25" ref="1">
    <original>LTSP</original>
    <variation>SQA</variation>
    <location>
        <begin position="430"/>
        <end position="433"/>
    </location>
</feature>
<feature type="sequence conflict" description="In Ref. 11; CAA67203." evidence="25" ref="11">
    <original>T</original>
    <variation>A</variation>
    <location>
        <position position="431"/>
    </location>
</feature>
<feature type="sequence conflict" description="In Ref. 2; AAA35748 and 11; CAA67203/CAA31376." evidence="25" ref="2 11">
    <original>S</original>
    <variation>D</variation>
    <location>
        <position position="432"/>
    </location>
</feature>
<feature type="strand" evidence="40">
    <location>
        <begin position="53"/>
        <end position="57"/>
    </location>
</feature>
<feature type="strand" evidence="39">
    <location>
        <begin position="59"/>
        <end position="63"/>
    </location>
</feature>
<reference key="1">
    <citation type="journal article" date="1990" name="Gene">
        <title>Organization and sequence of the human gene encoding cytokeratin 8.</title>
        <authorList>
            <person name="Krauss S."/>
            <person name="Franke W.W."/>
        </authorList>
    </citation>
    <scope>NUCLEOTIDE SEQUENCE [GENOMIC DNA]</scope>
    <scope>VARIANT GLY-417</scope>
</reference>
<reference key="2">
    <citation type="journal article" date="1990" name="Mol. Endocrinol.">
        <title>Cloning and sequence of cDNA for human placental cytokeratin 8. Regulation of the mRNA in trophoblastic cells by cAMP.</title>
        <authorList>
            <person name="Yamamoto R."/>
            <person name="Kao L.C."/>
            <person name="McKnight C.E."/>
            <person name="Strauss J.F. III"/>
        </authorList>
    </citation>
    <scope>NUCLEOTIDE SEQUENCE [MRNA]</scope>
</reference>
<reference key="3">
    <citation type="journal article" date="1990" name="New Biol.">
        <title>Embryonic simple epithelial keratins 8 and 18: chromosomal location emphasizes difference from other keratin pairs.</title>
        <authorList>
            <person name="Waseem A."/>
            <person name="Alexander C.M."/>
            <person name="Steel J.B."/>
            <person name="Lane E.B."/>
        </authorList>
    </citation>
    <scope>NUCLEOTIDE SEQUENCE [GENOMIC DNA / MRNA] (ISOFORM 1)</scope>
    <source>
        <tissue>Placenta</tissue>
    </source>
</reference>
<reference key="4">
    <citation type="journal article" date="1997" name="J. Biol. Chem.">
        <title>Phosphorylation of human keratin 8 in vivo at conserved head domain serine 23 and at epidermal growth factor-stimulated tail domain serine 431.</title>
        <authorList>
            <person name="Ku N.-O."/>
            <person name="Omary M.B."/>
        </authorList>
    </citation>
    <scope>NUCLEOTIDE SEQUENCE [MRNA] (ISOFORM 1)</scope>
    <scope>PHOSPHORYLATION AT SER-24 AND SER-432</scope>
</reference>
<reference key="5">
    <citation type="journal article" date="2004" name="Nat. Genet.">
        <title>Complete sequencing and characterization of 21,243 full-length human cDNAs.</title>
        <authorList>
            <person name="Ota T."/>
            <person name="Suzuki Y."/>
            <person name="Nishikawa T."/>
            <person name="Otsuki T."/>
            <person name="Sugiyama T."/>
            <person name="Irie R."/>
            <person name="Wakamatsu A."/>
            <person name="Hayashi K."/>
            <person name="Sato H."/>
            <person name="Nagai K."/>
            <person name="Kimura K."/>
            <person name="Makita H."/>
            <person name="Sekine M."/>
            <person name="Obayashi M."/>
            <person name="Nishi T."/>
            <person name="Shibahara T."/>
            <person name="Tanaka T."/>
            <person name="Ishii S."/>
            <person name="Yamamoto J."/>
            <person name="Saito K."/>
            <person name="Kawai Y."/>
            <person name="Isono Y."/>
            <person name="Nakamura Y."/>
            <person name="Nagahari K."/>
            <person name="Murakami K."/>
            <person name="Yasuda T."/>
            <person name="Iwayanagi T."/>
            <person name="Wagatsuma M."/>
            <person name="Shiratori A."/>
            <person name="Sudo H."/>
            <person name="Hosoiri T."/>
            <person name="Kaku Y."/>
            <person name="Kodaira H."/>
            <person name="Kondo H."/>
            <person name="Sugawara M."/>
            <person name="Takahashi M."/>
            <person name="Kanda K."/>
            <person name="Yokoi T."/>
            <person name="Furuya T."/>
            <person name="Kikkawa E."/>
            <person name="Omura Y."/>
            <person name="Abe K."/>
            <person name="Kamihara K."/>
            <person name="Katsuta N."/>
            <person name="Sato K."/>
            <person name="Tanikawa M."/>
            <person name="Yamazaki M."/>
            <person name="Ninomiya K."/>
            <person name="Ishibashi T."/>
            <person name="Yamashita H."/>
            <person name="Murakawa K."/>
            <person name="Fujimori K."/>
            <person name="Tanai H."/>
            <person name="Kimata M."/>
            <person name="Watanabe M."/>
            <person name="Hiraoka S."/>
            <person name="Chiba Y."/>
            <person name="Ishida S."/>
            <person name="Ono Y."/>
            <person name="Takiguchi S."/>
            <person name="Watanabe S."/>
            <person name="Yosida M."/>
            <person name="Hotuta T."/>
            <person name="Kusano J."/>
            <person name="Kanehori K."/>
            <person name="Takahashi-Fujii A."/>
            <person name="Hara H."/>
            <person name="Tanase T.-O."/>
            <person name="Nomura Y."/>
            <person name="Togiya S."/>
            <person name="Komai F."/>
            <person name="Hara R."/>
            <person name="Takeuchi K."/>
            <person name="Arita M."/>
            <person name="Imose N."/>
            <person name="Musashino K."/>
            <person name="Yuuki H."/>
            <person name="Oshima A."/>
            <person name="Sasaki N."/>
            <person name="Aotsuka S."/>
            <person name="Yoshikawa Y."/>
            <person name="Matsunawa H."/>
            <person name="Ichihara T."/>
            <person name="Shiohata N."/>
            <person name="Sano S."/>
            <person name="Moriya S."/>
            <person name="Momiyama H."/>
            <person name="Satoh N."/>
            <person name="Takami S."/>
            <person name="Terashima Y."/>
            <person name="Suzuki O."/>
            <person name="Nakagawa S."/>
            <person name="Senoh A."/>
            <person name="Mizoguchi H."/>
            <person name="Goto Y."/>
            <person name="Shimizu F."/>
            <person name="Wakebe H."/>
            <person name="Hishigaki H."/>
            <person name="Watanabe T."/>
            <person name="Sugiyama A."/>
            <person name="Takemoto M."/>
            <person name="Kawakami B."/>
            <person name="Yamazaki M."/>
            <person name="Watanabe K."/>
            <person name="Kumagai A."/>
            <person name="Itakura S."/>
            <person name="Fukuzumi Y."/>
            <person name="Fujimori Y."/>
            <person name="Komiyama M."/>
            <person name="Tashiro H."/>
            <person name="Tanigami A."/>
            <person name="Fujiwara T."/>
            <person name="Ono T."/>
            <person name="Yamada K."/>
            <person name="Fujii Y."/>
            <person name="Ozaki K."/>
            <person name="Hirao M."/>
            <person name="Ohmori Y."/>
            <person name="Kawabata A."/>
            <person name="Hikiji T."/>
            <person name="Kobatake N."/>
            <person name="Inagaki H."/>
            <person name="Ikema Y."/>
            <person name="Okamoto S."/>
            <person name="Okitani R."/>
            <person name="Kawakami T."/>
            <person name="Noguchi S."/>
            <person name="Itoh T."/>
            <person name="Shigeta K."/>
            <person name="Senba T."/>
            <person name="Matsumura K."/>
            <person name="Nakajima Y."/>
            <person name="Mizuno T."/>
            <person name="Morinaga M."/>
            <person name="Sasaki M."/>
            <person name="Togashi T."/>
            <person name="Oyama M."/>
            <person name="Hata H."/>
            <person name="Watanabe M."/>
            <person name="Komatsu T."/>
            <person name="Mizushima-Sugano J."/>
            <person name="Satoh T."/>
            <person name="Shirai Y."/>
            <person name="Takahashi Y."/>
            <person name="Nakagawa K."/>
            <person name="Okumura K."/>
            <person name="Nagase T."/>
            <person name="Nomura N."/>
            <person name="Kikuchi H."/>
            <person name="Masuho Y."/>
            <person name="Yamashita R."/>
            <person name="Nakai K."/>
            <person name="Yada T."/>
            <person name="Nakamura Y."/>
            <person name="Ohara O."/>
            <person name="Isogai T."/>
            <person name="Sugano S."/>
        </authorList>
    </citation>
    <scope>NUCLEOTIDE SEQUENCE [LARGE SCALE MRNA] (ISOFORMS 1 AND 2)</scope>
    <source>
        <tissue>Testis</tissue>
    </source>
</reference>
<reference key="6">
    <citation type="submission" date="2005-04" db="EMBL/GenBank/DDBJ databases">
        <authorList>
            <person name="Suzuki Y."/>
            <person name="Sugano S."/>
            <person name="Totoki Y."/>
            <person name="Toyoda A."/>
            <person name="Takeda T."/>
            <person name="Sakaki Y."/>
            <person name="Tanaka A."/>
            <person name="Yokoyama S."/>
        </authorList>
    </citation>
    <scope>NUCLEOTIDE SEQUENCE [LARGE SCALE MRNA] (ISOFORM 1)</scope>
    <source>
        <tissue>Kidney</tissue>
    </source>
</reference>
<reference key="7">
    <citation type="journal article" date="2006" name="Nature">
        <title>The finished DNA sequence of human chromosome 12.</title>
        <authorList>
            <person name="Scherer S.E."/>
            <person name="Muzny D.M."/>
            <person name="Buhay C.J."/>
            <person name="Chen R."/>
            <person name="Cree A."/>
            <person name="Ding Y."/>
            <person name="Dugan-Rocha S."/>
            <person name="Gill R."/>
            <person name="Gunaratne P."/>
            <person name="Harris R.A."/>
            <person name="Hawes A.C."/>
            <person name="Hernandez J."/>
            <person name="Hodgson A.V."/>
            <person name="Hume J."/>
            <person name="Jackson A."/>
            <person name="Khan Z.M."/>
            <person name="Kovar-Smith C."/>
            <person name="Lewis L.R."/>
            <person name="Lozado R.J."/>
            <person name="Metzker M.L."/>
            <person name="Milosavljevic A."/>
            <person name="Miner G.R."/>
            <person name="Montgomery K.T."/>
            <person name="Morgan M.B."/>
            <person name="Nazareth L.V."/>
            <person name="Scott G."/>
            <person name="Sodergren E."/>
            <person name="Song X.-Z."/>
            <person name="Steffen D."/>
            <person name="Lovering R.C."/>
            <person name="Wheeler D.A."/>
            <person name="Worley K.C."/>
            <person name="Yuan Y."/>
            <person name="Zhang Z."/>
            <person name="Adams C.Q."/>
            <person name="Ansari-Lari M.A."/>
            <person name="Ayele M."/>
            <person name="Brown M.J."/>
            <person name="Chen G."/>
            <person name="Chen Z."/>
            <person name="Clerc-Blankenburg K.P."/>
            <person name="Davis C."/>
            <person name="Delgado O."/>
            <person name="Dinh H.H."/>
            <person name="Draper H."/>
            <person name="Gonzalez-Garay M.L."/>
            <person name="Havlak P."/>
            <person name="Jackson L.R."/>
            <person name="Jacob L.S."/>
            <person name="Kelly S.H."/>
            <person name="Li L."/>
            <person name="Li Z."/>
            <person name="Liu J."/>
            <person name="Liu W."/>
            <person name="Lu J."/>
            <person name="Maheshwari M."/>
            <person name="Nguyen B.-V."/>
            <person name="Okwuonu G.O."/>
            <person name="Pasternak S."/>
            <person name="Perez L.M."/>
            <person name="Plopper F.J.H."/>
            <person name="Santibanez J."/>
            <person name="Shen H."/>
            <person name="Tabor P.E."/>
            <person name="Verduzco D."/>
            <person name="Waldron L."/>
            <person name="Wang Q."/>
            <person name="Williams G.A."/>
            <person name="Zhang J."/>
            <person name="Zhou J."/>
            <person name="Allen C.C."/>
            <person name="Amin A.G."/>
            <person name="Anyalebechi V."/>
            <person name="Bailey M."/>
            <person name="Barbaria J.A."/>
            <person name="Bimage K.E."/>
            <person name="Bryant N.P."/>
            <person name="Burch P.E."/>
            <person name="Burkett C.E."/>
            <person name="Burrell K.L."/>
            <person name="Calderon E."/>
            <person name="Cardenas V."/>
            <person name="Carter K."/>
            <person name="Casias K."/>
            <person name="Cavazos I."/>
            <person name="Cavazos S.R."/>
            <person name="Ceasar H."/>
            <person name="Chacko J."/>
            <person name="Chan S.N."/>
            <person name="Chavez D."/>
            <person name="Christopoulos C."/>
            <person name="Chu J."/>
            <person name="Cockrell R."/>
            <person name="Cox C.D."/>
            <person name="Dang M."/>
            <person name="Dathorne S.R."/>
            <person name="David R."/>
            <person name="Davis C.M."/>
            <person name="Davy-Carroll L."/>
            <person name="Deshazo D.R."/>
            <person name="Donlin J.E."/>
            <person name="D'Souza L."/>
            <person name="Eaves K.A."/>
            <person name="Egan A."/>
            <person name="Emery-Cohen A.J."/>
            <person name="Escotto M."/>
            <person name="Flagg N."/>
            <person name="Forbes L.D."/>
            <person name="Gabisi A.M."/>
            <person name="Garza M."/>
            <person name="Hamilton C."/>
            <person name="Henderson N."/>
            <person name="Hernandez O."/>
            <person name="Hines S."/>
            <person name="Hogues M.E."/>
            <person name="Huang M."/>
            <person name="Idlebird D.G."/>
            <person name="Johnson R."/>
            <person name="Jolivet A."/>
            <person name="Jones S."/>
            <person name="Kagan R."/>
            <person name="King L.M."/>
            <person name="Leal B."/>
            <person name="Lebow H."/>
            <person name="Lee S."/>
            <person name="LeVan J.M."/>
            <person name="Lewis L.C."/>
            <person name="London P."/>
            <person name="Lorensuhewa L.M."/>
            <person name="Loulseged H."/>
            <person name="Lovett D.A."/>
            <person name="Lucier A."/>
            <person name="Lucier R.L."/>
            <person name="Ma J."/>
            <person name="Madu R.C."/>
            <person name="Mapua P."/>
            <person name="Martindale A.D."/>
            <person name="Martinez E."/>
            <person name="Massey E."/>
            <person name="Mawhiney S."/>
            <person name="Meador M.G."/>
            <person name="Mendez S."/>
            <person name="Mercado C."/>
            <person name="Mercado I.C."/>
            <person name="Merritt C.E."/>
            <person name="Miner Z.L."/>
            <person name="Minja E."/>
            <person name="Mitchell T."/>
            <person name="Mohabbat F."/>
            <person name="Mohabbat K."/>
            <person name="Montgomery B."/>
            <person name="Moore N."/>
            <person name="Morris S."/>
            <person name="Munidasa M."/>
            <person name="Ngo R.N."/>
            <person name="Nguyen N.B."/>
            <person name="Nickerson E."/>
            <person name="Nwaokelemeh O.O."/>
            <person name="Nwokenkwo S."/>
            <person name="Obregon M."/>
            <person name="Oguh M."/>
            <person name="Oragunye N."/>
            <person name="Oviedo R.J."/>
            <person name="Parish B.J."/>
            <person name="Parker D.N."/>
            <person name="Parrish J."/>
            <person name="Parks K.L."/>
            <person name="Paul H.A."/>
            <person name="Payton B.A."/>
            <person name="Perez A."/>
            <person name="Perrin W."/>
            <person name="Pickens A."/>
            <person name="Primus E.L."/>
            <person name="Pu L.-L."/>
            <person name="Puazo M."/>
            <person name="Quiles M.M."/>
            <person name="Quiroz J.B."/>
            <person name="Rabata D."/>
            <person name="Reeves K."/>
            <person name="Ruiz S.J."/>
            <person name="Shao H."/>
            <person name="Sisson I."/>
            <person name="Sonaike T."/>
            <person name="Sorelle R.P."/>
            <person name="Sutton A.E."/>
            <person name="Svatek A.F."/>
            <person name="Svetz L.A."/>
            <person name="Tamerisa K.S."/>
            <person name="Taylor T.R."/>
            <person name="Teague B."/>
            <person name="Thomas N."/>
            <person name="Thorn R.D."/>
            <person name="Trejos Z.Y."/>
            <person name="Trevino B.K."/>
            <person name="Ukegbu O.N."/>
            <person name="Urban J.B."/>
            <person name="Vasquez L.I."/>
            <person name="Vera V.A."/>
            <person name="Villasana D.M."/>
            <person name="Wang L."/>
            <person name="Ward-Moore S."/>
            <person name="Warren J.T."/>
            <person name="Wei X."/>
            <person name="White F."/>
            <person name="Williamson A.L."/>
            <person name="Wleczyk R."/>
            <person name="Wooden H.S."/>
            <person name="Wooden S.H."/>
            <person name="Yen J."/>
            <person name="Yoon L."/>
            <person name="Yoon V."/>
            <person name="Zorrilla S.E."/>
            <person name="Nelson D."/>
            <person name="Kucherlapati R."/>
            <person name="Weinstock G."/>
            <person name="Gibbs R.A."/>
        </authorList>
    </citation>
    <scope>NUCLEOTIDE SEQUENCE [LARGE SCALE GENOMIC DNA]</scope>
</reference>
<reference key="8">
    <citation type="submission" date="2005-07" db="EMBL/GenBank/DDBJ databases">
        <authorList>
            <person name="Mural R.J."/>
            <person name="Istrail S."/>
            <person name="Sutton G.G."/>
            <person name="Florea L."/>
            <person name="Halpern A.L."/>
            <person name="Mobarry C.M."/>
            <person name="Lippert R."/>
            <person name="Walenz B."/>
            <person name="Shatkay H."/>
            <person name="Dew I."/>
            <person name="Miller J.R."/>
            <person name="Flanigan M.J."/>
            <person name="Edwards N.J."/>
            <person name="Bolanos R."/>
            <person name="Fasulo D."/>
            <person name="Halldorsson B.V."/>
            <person name="Hannenhalli S."/>
            <person name="Turner R."/>
            <person name="Yooseph S."/>
            <person name="Lu F."/>
            <person name="Nusskern D.R."/>
            <person name="Shue B.C."/>
            <person name="Zheng X.H."/>
            <person name="Zhong F."/>
            <person name="Delcher A.L."/>
            <person name="Huson D.H."/>
            <person name="Kravitz S.A."/>
            <person name="Mouchard L."/>
            <person name="Reinert K."/>
            <person name="Remington K.A."/>
            <person name="Clark A.G."/>
            <person name="Waterman M.S."/>
            <person name="Eichler E.E."/>
            <person name="Adams M.D."/>
            <person name="Hunkapiller M.W."/>
            <person name="Myers E.W."/>
            <person name="Venter J.C."/>
        </authorList>
    </citation>
    <scope>NUCLEOTIDE SEQUENCE [LARGE SCALE GENOMIC DNA]</scope>
</reference>
<reference key="9">
    <citation type="journal article" date="2004" name="Genome Res.">
        <title>The status, quality, and expansion of the NIH full-length cDNA project: the Mammalian Gene Collection (MGC).</title>
        <authorList>
            <consortium name="The MGC Project Team"/>
        </authorList>
    </citation>
    <scope>NUCLEOTIDE SEQUENCE [LARGE SCALE MRNA] (ISOFORM 1)</scope>
    <scope>VARIANT CYS-62</scope>
    <source>
        <tissue>Colon</tissue>
        <tissue>Liver</tissue>
        <tissue>Lung</tissue>
        <tissue>Placenta</tissue>
    </source>
</reference>
<reference key="10">
    <citation type="journal article" date="1989" name="Mol. Cell. Biol.">
        <title>Posttranslational regulation of keratins: degradation of mouse and human keratins 18 and 8.</title>
        <authorList>
            <person name="Kulesh D.A."/>
            <person name="Cecena G."/>
            <person name="Darmon Y.M."/>
            <person name="Vasseur M."/>
            <person name="Oshima R.G."/>
        </authorList>
    </citation>
    <scope>NUCLEOTIDE SEQUENCE [MRNA] OF 1-231 (ISOFORM 1)</scope>
</reference>
<reference key="11">
    <citation type="journal article" date="1986" name="Differentiation">
        <title>Cytokeratin expression in simple epithelia. III. Detection of mRNAs encoding human cytokeratins nos. 8 and 18 in normal and tumor cells by hybridization with cDNA sequences in vitro and in situ.</title>
        <authorList>
            <person name="Leube R.E."/>
            <person name="Bosch F.X."/>
            <person name="Romano V."/>
            <person name="Zimbelmann R."/>
            <person name="Hofler H."/>
            <person name="Franke W.W."/>
        </authorList>
    </citation>
    <scope>NUCLEOTIDE SEQUENCE [MRNA] OF 205-483 (ISOFORM 1)</scope>
    <scope>VARIANTS GLY-417 AND ASP-429</scope>
</reference>
<reference key="12">
    <citation type="journal article" date="1997" name="Electrophoresis">
        <title>A two-dimensional gel database of human colon carcinoma proteins.</title>
        <authorList>
            <person name="Ji H."/>
            <person name="Reid G.E."/>
            <person name="Moritz R.L."/>
            <person name="Eddes J.S."/>
            <person name="Burgess A.W."/>
            <person name="Simpson R.J."/>
        </authorList>
    </citation>
    <scope>PARTIAL PROTEIN SEQUENCE</scope>
    <source>
        <tissue>Colon carcinoma</tissue>
    </source>
</reference>
<reference key="13">
    <citation type="journal article" date="1992" name="J. Biol. Chem.">
        <title>Characterization and dynamics of O-linked glycosylation of human cytokeratin 8 and 18.</title>
        <authorList>
            <person name="Chou C.F."/>
            <person name="Smith A.J."/>
            <person name="Omary M.B."/>
        </authorList>
    </citation>
    <scope>GLYCOSYLATION</scope>
</reference>
<reference key="14">
    <citation type="journal article" date="1992" name="J. Cell Biol.">
        <title>PKC epsilon-related kinase associates with and phosphorylates cytokeratin 8 and 18.</title>
        <authorList>
            <person name="Omary M.B."/>
            <person name="Baxter G.T."/>
            <person name="Chou C.F."/>
            <person name="Riopel C.L."/>
            <person name="Lin W.Y."/>
            <person name="Strulovici B."/>
        </authorList>
    </citation>
    <scope>PHOSPHORYLATION AT SER-9 AND SER-24</scope>
</reference>
<reference key="15">
    <citation type="journal article" date="2000" name="Arch. Oral Biol.">
        <title>An immunohistological study of cytokeratin 20 in human and mammalian oral epithelium.</title>
        <authorList>
            <person name="Barrett A.W."/>
            <person name="Cort E.M."/>
            <person name="Patel P."/>
            <person name="Berkovitz B.K.B."/>
        </authorList>
    </citation>
    <scope>INTERACTION WITH KRT20</scope>
    <scope>SUBCELLULAR LOCATION</scope>
    <scope>TISSUE SPECIFICITY</scope>
</reference>
<reference key="16">
    <citation type="journal article" date="2000" name="J. Biol. Chem.">
        <title>Dissection of protein linkage between keratins and pinin, a protein with dual location at desmosome-intermediate filament complex and in the nucleus.</title>
        <authorList>
            <person name="Shi J."/>
            <person name="Sugrue S.P."/>
        </authorList>
    </citation>
    <scope>INTERACTION WITH PNN</scope>
</reference>
<reference key="17">
    <citation type="journal article" date="2000" name="J. Cell Sci.">
        <title>Interaction of plakophilins with desmoplakin and intermediate filament proteins: an in vitro analysis.</title>
        <authorList>
            <person name="Hofmann I."/>
            <person name="Mertens C."/>
            <person name="Brettel M."/>
            <person name="Nimmrich V."/>
            <person name="Schnoelzer M."/>
            <person name="Herrmann H."/>
        </authorList>
    </citation>
    <scope>INTERACTION WITH PKP1; PKP2 AND KRT18</scope>
</reference>
<reference key="18">
    <citation type="journal article" date="2002" name="J. Biol. Chem.">
        <title>The intermediate filament protein keratin 8 is a novel cytoplasmic substrate for c-Jun N-terminal kinase.</title>
        <authorList>
            <person name="He T."/>
            <person name="Stepulak A."/>
            <person name="Holmstrom T.H."/>
            <person name="Omary M.B."/>
            <person name="Eriksson J.E."/>
        </authorList>
    </citation>
    <scope>PHOSPHORYLATION AT SER-74</scope>
</reference>
<reference key="19">
    <citation type="journal article" date="2002" name="J. Biol. Chem.">
        <title>Keratin 8 phosphorylation by p38 kinase regulates cellular keratin filament reorganization: modulation by a keratin 1-like disease causing mutation.</title>
        <authorList>
            <person name="Ku N.O."/>
            <person name="Azhar S."/>
            <person name="Omary M.B."/>
        </authorList>
    </citation>
    <scope>PHOSPHORYLATION AT SER-74</scope>
    <scope>MUTAGENESIS OF LEU-72 AND SER-74</scope>
</reference>
<reference key="20">
    <citation type="journal article" date="2005" name="J. Cell Sci.">
        <title>Identification of trichoplein, a novel keratin filament-binding protein.</title>
        <authorList>
            <person name="Nishizawa M."/>
            <person name="Izawa I."/>
            <person name="Inoko A."/>
            <person name="Hayashi Y."/>
            <person name="Nagata K."/>
            <person name="Yokoyama T."/>
            <person name="Usukura J."/>
            <person name="Inagaki M."/>
        </authorList>
    </citation>
    <scope>INTERACTION WITH TCHP</scope>
</reference>
<reference key="21">
    <citation type="journal article" date="2005" name="Mol. Biol. Cell">
        <title>Specific interaction of the actin-binding domain of dystrophin with intermediate filaments containing keratin 19.</title>
        <authorList>
            <person name="Stone M.R."/>
            <person name="O'Neill A."/>
            <person name="Catino D."/>
            <person name="Bloch R.J."/>
        </authorList>
    </citation>
    <scope>FUNCTION</scope>
    <scope>SUBUNIT</scope>
    <scope>TISSUE SPECIFICITY</scope>
</reference>
<reference key="22">
    <citation type="journal article" date="2005" name="Proteomics">
        <title>Proteomic profiling of cellular proteins interacting with the hepatitis C virus core protein.</title>
        <authorList>
            <person name="Kang S.-M."/>
            <person name="Shin M.-J."/>
            <person name="Kim J.-H."/>
            <person name="Oh J.-W."/>
        </authorList>
    </citation>
    <scope>INTERACTION WITH HCV CORE PROTEIN (MICROBIAL INFECTION)</scope>
</reference>
<reference key="23">
    <citation type="journal article" date="2006" name="Cell">
        <title>Global, in vivo, and site-specific phosphorylation dynamics in signaling networks.</title>
        <authorList>
            <person name="Olsen J.V."/>
            <person name="Blagoev B."/>
            <person name="Gnad F."/>
            <person name="Macek B."/>
            <person name="Kumar C."/>
            <person name="Mortensen P."/>
            <person name="Mann M."/>
        </authorList>
    </citation>
    <scope>PHOSPHORYLATION [LARGE SCALE ANALYSIS] AT SER-253 AND SER-330</scope>
    <scope>IDENTIFICATION BY MASS SPECTROMETRY [LARGE SCALE ANALYSIS]</scope>
    <source>
        <tissue>Cervix carcinoma</tissue>
    </source>
</reference>
<reference key="24">
    <citation type="journal article" date="2006" name="J. Biol. Chem.">
        <title>Keratin 20 serine 13 phosphorylation is a stress and intestinal goblet cell marker.</title>
        <authorList>
            <person name="Zhou Q."/>
            <person name="Cadrin M."/>
            <person name="Herrmann H."/>
            <person name="Chen C.-H."/>
            <person name="Chalkley R.J."/>
            <person name="Burlingame A.L."/>
            <person name="Omary M.B."/>
        </authorList>
    </citation>
    <scope>INTERACTION WITH KRT20</scope>
</reference>
<reference key="25">
    <citation type="journal article" date="2006" name="Nat. Biotechnol.">
        <title>A probability-based approach for high-throughput protein phosphorylation analysis and site localization.</title>
        <authorList>
            <person name="Beausoleil S.A."/>
            <person name="Villen J."/>
            <person name="Gerber S.A."/>
            <person name="Rush J."/>
            <person name="Gygi S.P."/>
        </authorList>
    </citation>
    <scope>IDENTIFICATION BY MASS SPECTROMETRY [LARGE SCALE ANALYSIS]</scope>
    <source>
        <tissue>Cervix carcinoma</tissue>
    </source>
</reference>
<reference key="26">
    <citation type="journal article" date="2008" name="Mol. Cell">
        <title>Kinase-selective enrichment enables quantitative phosphoproteomics of the kinome across the cell cycle.</title>
        <authorList>
            <person name="Daub H."/>
            <person name="Olsen J.V."/>
            <person name="Bairlein M."/>
            <person name="Gnad F."/>
            <person name="Oppermann F.S."/>
            <person name="Korner R."/>
            <person name="Greff Z."/>
            <person name="Keri G."/>
            <person name="Stemmann O."/>
            <person name="Mann M."/>
        </authorList>
    </citation>
    <scope>PHOSPHORYLATION [LARGE SCALE ANALYSIS] AT SER-253 AND SER-258</scope>
    <scope>IDENTIFICATION BY MASS SPECTROMETRY [LARGE SCALE ANALYSIS]</scope>
    <source>
        <tissue>Cervix carcinoma</tissue>
    </source>
</reference>
<reference key="27">
    <citation type="journal article" date="2008" name="Proc. Natl. Acad. Sci. U.S.A.">
        <title>A quantitative atlas of mitotic phosphorylation.</title>
        <authorList>
            <person name="Dephoure N."/>
            <person name="Zhou C."/>
            <person name="Villen J."/>
            <person name="Beausoleil S.A."/>
            <person name="Bakalarski C.E."/>
            <person name="Elledge S.J."/>
            <person name="Gygi S.P."/>
        </authorList>
    </citation>
    <scope>PHOSPHORYLATION [LARGE SCALE ANALYSIS] AT SER-21; SER-24; SER-27; SER-43; SER-253; SER-258; SER-274; SER-400; SER-410; SER-432; SER-475 AND SER-478</scope>
    <scope>IDENTIFICATION BY MASS SPECTROMETRY [LARGE SCALE ANALYSIS]</scope>
    <source>
        <tissue>Cervix carcinoma</tissue>
    </source>
</reference>
<reference key="28">
    <citation type="journal article" date="2009" name="Mol. Cell. Biol.">
        <title>APE1/Ref-1 interacts with NPM1 within nucleoli and plays a role in the rRNA quality control process.</title>
        <authorList>
            <person name="Vascotto C."/>
            <person name="Fantini D."/>
            <person name="Romanello M."/>
            <person name="Cesaratto L."/>
            <person name="Deganuto M."/>
            <person name="Leonardi A."/>
            <person name="Radicella J.P."/>
            <person name="Kelley M.R."/>
            <person name="D'Ambrosio C."/>
            <person name="Scaloni A."/>
            <person name="Quadrifoglio F."/>
            <person name="Tell G."/>
        </authorList>
    </citation>
    <scope>INTERACTION WITH APEX1</scope>
    <scope>IDENTIFICATION BY MASS SPECTROMETRY</scope>
    <scope>SUBCELLULAR LOCATION</scope>
</reference>
<reference key="29">
    <citation type="journal article" date="2009" name="Mol. Cell. Proteomics">
        <title>Large-scale proteomics analysis of the human kinome.</title>
        <authorList>
            <person name="Oppermann F.S."/>
            <person name="Gnad F."/>
            <person name="Olsen J.V."/>
            <person name="Hornberger R."/>
            <person name="Greff Z."/>
            <person name="Keri G."/>
            <person name="Mann M."/>
            <person name="Daub H."/>
        </authorList>
    </citation>
    <scope>PHOSPHORYLATION [LARGE SCALE ANALYSIS] AT SER-253</scope>
    <scope>IDENTIFICATION BY MASS SPECTROMETRY [LARGE SCALE ANALYSIS]</scope>
</reference>
<reference key="30">
    <citation type="journal article" date="2009" name="Science">
        <title>Lysine acetylation targets protein complexes and co-regulates major cellular functions.</title>
        <authorList>
            <person name="Choudhary C."/>
            <person name="Kumar C."/>
            <person name="Gnad F."/>
            <person name="Nielsen M.L."/>
            <person name="Rehman M."/>
            <person name="Walther T.C."/>
            <person name="Olsen J.V."/>
            <person name="Mann M."/>
        </authorList>
    </citation>
    <scope>ACETYLATION [LARGE SCALE ANALYSIS] AT LYS-207; LYS-295 AND LYS-325</scope>
    <scope>IDENTIFICATION BY MASS SPECTROMETRY [LARGE SCALE ANALYSIS]</scope>
</reference>
<reference key="31">
    <citation type="journal article" date="2010" name="J. Biol. Chem.">
        <title>O-GlcNAcylation determines the solubility, filament organization, and stability of keratins 8 and 18.</title>
        <authorList>
            <person name="Srikanth B."/>
            <person name="Vaidya M.M."/>
            <person name="Kalraiya R.D."/>
        </authorList>
    </citation>
    <scope>GLYCOSYLATION</scope>
</reference>
<reference key="32">
    <citation type="journal article" date="2010" name="Sci. Signal.">
        <title>Quantitative phosphoproteomics reveals widespread full phosphorylation site occupancy during mitosis.</title>
        <authorList>
            <person name="Olsen J.V."/>
            <person name="Vermeulen M."/>
            <person name="Santamaria A."/>
            <person name="Kumar C."/>
            <person name="Miller M.L."/>
            <person name="Jensen L.J."/>
            <person name="Gnad F."/>
            <person name="Cox J."/>
            <person name="Jensen T.S."/>
            <person name="Nigg E.A."/>
            <person name="Brunak S."/>
            <person name="Mann M."/>
        </authorList>
    </citation>
    <scope>PHOSPHORYLATION [LARGE SCALE ANALYSIS] AT TYR-228; SER-475 AND SER-478</scope>
    <scope>IDENTIFICATION BY MASS SPECTROMETRY [LARGE SCALE ANALYSIS]</scope>
    <source>
        <tissue>Cervix carcinoma</tissue>
    </source>
</reference>
<reference key="33">
    <citation type="journal article" date="2011" name="BMC Syst. Biol.">
        <title>Initial characterization of the human central proteome.</title>
        <authorList>
            <person name="Burkard T.R."/>
            <person name="Planyavsky M."/>
            <person name="Kaupe I."/>
            <person name="Breitwieser F.P."/>
            <person name="Buerckstuemmer T."/>
            <person name="Bennett K.L."/>
            <person name="Superti-Furga G."/>
            <person name="Colinge J."/>
        </authorList>
    </citation>
    <scope>IDENTIFICATION BY MASS SPECTROMETRY [LARGE SCALE ANALYSIS]</scope>
</reference>
<reference key="34">
    <citation type="journal article" date="2011" name="Mol. Cell. Proteomics">
        <title>The first identification of lysine malonylation substrates and its regulatory enzyme.</title>
        <authorList>
            <person name="Peng C."/>
            <person name="Lu Z."/>
            <person name="Xie Z."/>
            <person name="Cheng Z."/>
            <person name="Chen Y."/>
            <person name="Tan M."/>
            <person name="Luo H."/>
            <person name="Zhang Y."/>
            <person name="He W."/>
            <person name="Yang K."/>
            <person name="Zwaans B.M."/>
            <person name="Tishkoff D."/>
            <person name="Ho L."/>
            <person name="Lombard D."/>
            <person name="He T.C."/>
            <person name="Dai J."/>
            <person name="Verdin E."/>
            <person name="Ye Y."/>
            <person name="Zhao Y."/>
        </authorList>
    </citation>
    <scope>MALONYLATION AT LYS-101</scope>
</reference>
<reference key="35">
    <citation type="journal article" date="2011" name="Mol. Pharmacol.">
        <title>G protein-coupled estrogen receptor 1/G protein-coupled receptor 30 localizes in the plasma membrane and traffics intracellularly on cytokeratin intermediate filaments.</title>
        <authorList>
            <person name="Sanden C."/>
            <person name="Broselid S."/>
            <person name="Cornmark L."/>
            <person name="Andersson K."/>
            <person name="Daszkiewicz-Nilsson J."/>
            <person name="Martensson U.E."/>
            <person name="Olde B."/>
            <person name="Leeb-Lundberg L.M."/>
        </authorList>
    </citation>
    <scope>INTERACTION WITH GPER1</scope>
</reference>
<reference key="36">
    <citation type="journal article" date="2011" name="Sci. Signal.">
        <title>System-wide temporal characterization of the proteome and phosphoproteome of human embryonic stem cell differentiation.</title>
        <authorList>
            <person name="Rigbolt K.T."/>
            <person name="Prokhorova T.A."/>
            <person name="Akimov V."/>
            <person name="Henningsen J."/>
            <person name="Johansen P.T."/>
            <person name="Kratchmarova I."/>
            <person name="Kassem M."/>
            <person name="Mann M."/>
            <person name="Olsen J.V."/>
            <person name="Blagoev B."/>
        </authorList>
    </citation>
    <scope>PHOSPHORYLATION [LARGE SCALE ANALYSIS] AT SER-24; SER-43; SER-253 AND SER-258</scope>
    <scope>IDENTIFICATION BY MASS SPECTROMETRY [LARGE SCALE ANALYSIS]</scope>
</reference>
<reference key="37">
    <citation type="journal article" date="2012" name="Biochim. Biophys. Acta">
        <title>Characterization of O-GlcNAc cycling and proteomic identification of differentially O-GlcNAcylated proteins during G1/S transition.</title>
        <authorList>
            <person name="Drougat L."/>
            <person name="Olivier-Van Stichelen S."/>
            <person name="Mortuaire M."/>
            <person name="Foulquier F."/>
            <person name="Lacoste A.S."/>
            <person name="Michalski J.C."/>
            <person name="Lefebvre T."/>
            <person name="Vercoutter-Edouart A.S."/>
        </authorList>
    </citation>
    <scope>GLYCOSYLATION</scope>
</reference>
<reference key="38">
    <citation type="journal article" date="2013" name="J. Proteome Res.">
        <title>Toward a comprehensive characterization of a human cancer cell phosphoproteome.</title>
        <authorList>
            <person name="Zhou H."/>
            <person name="Di Palma S."/>
            <person name="Preisinger C."/>
            <person name="Peng M."/>
            <person name="Polat A.N."/>
            <person name="Heck A.J."/>
            <person name="Mohammed S."/>
        </authorList>
    </citation>
    <scope>PHOSPHORYLATION [LARGE SCALE ANALYSIS] AT SER-13; SER-21; SER-31; SER-34; SER-39; SER-43; SER-253; SER-258; SER-274; SER-291; SER-330; SER-404; SER-410; SER-475 AND SER-477</scope>
    <scope>IDENTIFICATION BY MASS SPECTROMETRY [LARGE SCALE ANALYSIS]</scope>
    <source>
        <tissue>Cervix carcinoma</tissue>
        <tissue>Erythroleukemia</tissue>
    </source>
</reference>
<reference key="39">
    <citation type="journal article" date="2014" name="J. Invest. Dermatol.">
        <title>Interaction of plectin with keratins 5 and 14: dependence on several plectin domains and keratin quaternary structure.</title>
        <authorList>
            <person name="Bouameur J.E."/>
            <person name="Favre B."/>
            <person name="Fontao L."/>
            <person name="Lingasamy P."/>
            <person name="Begre N."/>
            <person name="Borradori L."/>
        </authorList>
    </citation>
    <scope>IDENTIFICATION IN A COMPLEX WITH KRT18</scope>
    <scope>INTERACTION WITH KRT18 AND PLEC</scope>
</reference>
<reference key="40">
    <citation type="journal article" date="2014" name="J. Proteomics">
        <title>An enzyme assisted RP-RPLC approach for in-depth analysis of human liver phosphoproteome.</title>
        <authorList>
            <person name="Bian Y."/>
            <person name="Song C."/>
            <person name="Cheng K."/>
            <person name="Dong M."/>
            <person name="Wang F."/>
            <person name="Huang J."/>
            <person name="Sun D."/>
            <person name="Wang L."/>
            <person name="Ye M."/>
            <person name="Zou H."/>
        </authorList>
    </citation>
    <scope>PHOSPHORYLATION [LARGE SCALE ANALYSIS] AT SER-15; SER-22; SER-253; SER-258; SER-410 AND SER-475</scope>
    <scope>IDENTIFICATION BY MASS SPECTROMETRY [LARGE SCALE ANALYSIS]</scope>
    <source>
        <tissue>Liver</tissue>
    </source>
</reference>
<reference key="41">
    <citation type="journal article" date="2014" name="Mol. Cell. Proteomics">
        <title>Immunoaffinity enrichment and mass spectrometry analysis of protein methylation.</title>
        <authorList>
            <person name="Guo A."/>
            <person name="Gu H."/>
            <person name="Zhou J."/>
            <person name="Mulhern D."/>
            <person name="Wang Y."/>
            <person name="Lee K.A."/>
            <person name="Yang V."/>
            <person name="Aguiar M."/>
            <person name="Kornhauser J."/>
            <person name="Jia X."/>
            <person name="Ren J."/>
            <person name="Beausoleil S.A."/>
            <person name="Silva J.C."/>
            <person name="Vemulapalli V."/>
            <person name="Bedford M.T."/>
            <person name="Comb M.J."/>
        </authorList>
    </citation>
    <scope>METHYLATION [LARGE SCALE ANALYSIS] AT ARG-23; ARG-32; ARG-40 AND ARG-47</scope>
    <scope>IDENTIFICATION BY MASS SPECTROMETRY [LARGE SCALE ANALYSIS]</scope>
    <source>
        <tissue>Colon carcinoma</tissue>
    </source>
</reference>
<reference key="42">
    <citation type="journal article" date="2014" name="Nat. Struct. Mol. Biol.">
        <title>Uncovering global SUMOylation signaling networks in a site-specific manner.</title>
        <authorList>
            <person name="Hendriks I.A."/>
            <person name="D'Souza R.C."/>
            <person name="Yang B."/>
            <person name="Verlaan-de Vries M."/>
            <person name="Mann M."/>
            <person name="Vertegaal A.C."/>
        </authorList>
    </citation>
    <scope>SUMOYLATION [LARGE SCALE ANALYSIS] AT LYS-285; LYS-304 AND LYS-472</scope>
    <scope>IDENTIFICATION BY MASS SPECTROMETRY [LARGE SCALE ANALYSIS]</scope>
</reference>
<reference key="43">
    <citation type="journal article" date="2014" name="Proc. Natl. Acad. Sci. U.S.A.">
        <title>Mapping of SUMO sites and analysis of SUMOylation changes induced by external stimuli.</title>
        <authorList>
            <person name="Impens F."/>
            <person name="Radoshevich L."/>
            <person name="Cossart P."/>
            <person name="Ribet D."/>
        </authorList>
    </citation>
    <scope>SUMOYLATION [LARGE SCALE ANALYSIS] AT LYS-197; LYS-285 AND LYS-472</scope>
    <scope>IDENTIFICATION BY MASS SPECTROMETRY [LARGE SCALE ANALYSIS]</scope>
</reference>
<reference key="44">
    <citation type="journal article" date="2017" name="Nat. Struct. Mol. Biol.">
        <title>Site-specific mapping of the human SUMO proteome reveals co-modification with phosphorylation.</title>
        <authorList>
            <person name="Hendriks I.A."/>
            <person name="Lyon D."/>
            <person name="Young C."/>
            <person name="Jensen L.J."/>
            <person name="Vertegaal A.C."/>
            <person name="Nielsen M.L."/>
        </authorList>
    </citation>
    <scope>SUMOYLATION [LARGE SCALE ANALYSIS] AT LYS-11; LYS-122; LYS-130; LYS-197; LYS-264; LYS-285; LYS-295; LYS-304; LYS-325; LYS-393 AND LYS-472</scope>
    <scope>IDENTIFICATION BY MASS SPECTROMETRY [LARGE SCALE ANALYSIS]</scope>
</reference>
<reference key="45">
    <citation type="journal article" date="2003" name="Proc. Natl. Acad. Sci. U.S.A.">
        <title>Keratin 8 and 18 mutations are risk factors for developing liver disease of multiple etiologies.</title>
        <authorList>
            <person name="Ku N.-O."/>
            <person name="Darling J.M."/>
            <person name="Krams S.M."/>
            <person name="Esquivel C.O."/>
            <person name="Keeffe E.B."/>
            <person name="Sibley R.K."/>
            <person name="Lee Y.M."/>
            <person name="Wright T.L."/>
            <person name="Omary M.B."/>
        </authorList>
    </citation>
    <scope>VARIANTS CIRRH VAL-53; CYS-54 AND CYS-62</scope>
    <scope>VARIANT VAL-63</scope>
</reference>
<protein>
    <recommendedName>
        <fullName>Keratin, type II cytoskeletal 8</fullName>
    </recommendedName>
    <alternativeName>
        <fullName>Cytokeratin-8</fullName>
        <shortName>CK-8</shortName>
    </alternativeName>
    <alternativeName>
        <fullName>Keratin-8</fullName>
        <shortName>K8</shortName>
    </alternativeName>
    <alternativeName>
        <fullName>Type-II keratin Kb8</fullName>
    </alternativeName>
</protein>
<evidence type="ECO:0000250" key="1">
    <source>
        <dbReference type="UniProtKB" id="P11679"/>
    </source>
</evidence>
<evidence type="ECO:0000250" key="2">
    <source>
        <dbReference type="UniProtKB" id="Q10758"/>
    </source>
</evidence>
<evidence type="ECO:0000255" key="3">
    <source>
        <dbReference type="PROSITE-ProRule" id="PRU01188"/>
    </source>
</evidence>
<evidence type="ECO:0000256" key="4">
    <source>
        <dbReference type="SAM" id="MobiDB-lite"/>
    </source>
</evidence>
<evidence type="ECO:0000269" key="5">
    <source>
    </source>
</evidence>
<evidence type="ECO:0000269" key="6">
    <source>
    </source>
</evidence>
<evidence type="ECO:0000269" key="7">
    <source>
    </source>
</evidence>
<evidence type="ECO:0000269" key="8">
    <source>
    </source>
</evidence>
<evidence type="ECO:0000269" key="9">
    <source>
    </source>
</evidence>
<evidence type="ECO:0000269" key="10">
    <source>
    </source>
</evidence>
<evidence type="ECO:0000269" key="11">
    <source>
    </source>
</evidence>
<evidence type="ECO:0000269" key="12">
    <source>
    </source>
</evidence>
<evidence type="ECO:0000269" key="13">
    <source>
    </source>
</evidence>
<evidence type="ECO:0000269" key="14">
    <source>
    </source>
</evidence>
<evidence type="ECO:0000269" key="15">
    <source>
    </source>
</evidence>
<evidence type="ECO:0000269" key="16">
    <source>
    </source>
</evidence>
<evidence type="ECO:0000269" key="17">
    <source>
    </source>
</evidence>
<evidence type="ECO:0000269" key="18">
    <source>
    </source>
</evidence>
<evidence type="ECO:0000269" key="19">
    <source>
    </source>
</evidence>
<evidence type="ECO:0000269" key="20">
    <source>
    </source>
</evidence>
<evidence type="ECO:0000269" key="21">
    <source>
    </source>
</evidence>
<evidence type="ECO:0000269" key="22">
    <source>
    </source>
</evidence>
<evidence type="ECO:0000269" key="23">
    <source>
    </source>
</evidence>
<evidence type="ECO:0000303" key="24">
    <source>
    </source>
</evidence>
<evidence type="ECO:0000305" key="25"/>
<evidence type="ECO:0007744" key="26">
    <source>
    </source>
</evidence>
<evidence type="ECO:0007744" key="27">
    <source>
    </source>
</evidence>
<evidence type="ECO:0007744" key="28">
    <source>
    </source>
</evidence>
<evidence type="ECO:0007744" key="29">
    <source>
    </source>
</evidence>
<evidence type="ECO:0007744" key="30">
    <source>
    </source>
</evidence>
<evidence type="ECO:0007744" key="31">
    <source>
    </source>
</evidence>
<evidence type="ECO:0007744" key="32">
    <source>
    </source>
</evidence>
<evidence type="ECO:0007744" key="33">
    <source>
    </source>
</evidence>
<evidence type="ECO:0007744" key="34">
    <source>
    </source>
</evidence>
<evidence type="ECO:0007744" key="35">
    <source>
    </source>
</evidence>
<evidence type="ECO:0007744" key="36">
    <source>
    </source>
</evidence>
<evidence type="ECO:0007744" key="37">
    <source>
    </source>
</evidence>
<evidence type="ECO:0007744" key="38">
    <source>
    </source>
</evidence>
<evidence type="ECO:0007829" key="39">
    <source>
        <dbReference type="PDB" id="7K3C"/>
    </source>
</evidence>
<evidence type="ECO:0007829" key="40">
    <source>
        <dbReference type="PDB" id="7K3Y"/>
    </source>
</evidence>
<organism>
    <name type="scientific">Homo sapiens</name>
    <name type="common">Human</name>
    <dbReference type="NCBI Taxonomy" id="9606"/>
    <lineage>
        <taxon>Eukaryota</taxon>
        <taxon>Metazoa</taxon>
        <taxon>Chordata</taxon>
        <taxon>Craniata</taxon>
        <taxon>Vertebrata</taxon>
        <taxon>Euteleostomi</taxon>
        <taxon>Mammalia</taxon>
        <taxon>Eutheria</taxon>
        <taxon>Euarchontoglires</taxon>
        <taxon>Primates</taxon>
        <taxon>Haplorrhini</taxon>
        <taxon>Catarrhini</taxon>
        <taxon>Hominidae</taxon>
        <taxon>Homo</taxon>
    </lineage>
</organism>
<gene>
    <name type="primary">KRT8</name>
    <name type="synonym">CYK8</name>
</gene>
<name>K2C8_HUMAN</name>
<sequence>MSIRVTQKSYKVSTSGPRAFSSRSYTSGPGSRISSSSFSRVGSSNFRGGLGGGYGGASGMGGITAVTVNQSLLSPLVLEVDPNIQAVRTQEKEQIKTLNNKFASFIDKVRFLEQQNKMLETKWSLLQQQKTARSNMDNMFESYINNLRRQLETLGQEKLKLEAELGNMQGLVEDFKNKYEDEINKRTEMENEFVLIKKDVDEAYMNKVELESRLEGLTDEINFLRQLYEEEIRELQSQISDTSVVLSMDNSRSLDMDSIIAEVKAQYEDIANRSRAEAESMYQIKYEELQSLAGKHGDDLRRTKTEISEMNRNISRLQAEIEGLKGQRASLEAAIADAEQRGELAIKDANAKLSELEAALQRAKQDMARQLREYQELMNVKLALDIEIATYRKLLEGEESRLESGMQNMSIHTKTTSGYAGGLSSAYGGLTSPGLSYSLGSSFGSGAGSSSFSRTSSSRAVVVKKIETRDGKLVSESSDVLPK</sequence>
<keyword id="KW-0002">3D-structure</keyword>
<keyword id="KW-0007">Acetylation</keyword>
<keyword id="KW-0025">Alternative splicing</keyword>
<keyword id="KW-0175">Coiled coil</keyword>
<keyword id="KW-0963">Cytoplasm</keyword>
<keyword id="KW-0903">Direct protein sequencing</keyword>
<keyword id="KW-0225">Disease variant</keyword>
<keyword id="KW-0325">Glycoprotein</keyword>
<keyword id="KW-0945">Host-virus interaction</keyword>
<keyword id="KW-0403">Intermediate filament</keyword>
<keyword id="KW-1017">Isopeptide bond</keyword>
<keyword id="KW-0416">Keratin</keyword>
<keyword id="KW-0488">Methylation</keyword>
<keyword id="KW-0539">Nucleus</keyword>
<keyword id="KW-0597">Phosphoprotein</keyword>
<keyword id="KW-1267">Proteomics identification</keyword>
<keyword id="KW-1185">Reference proteome</keyword>
<keyword id="KW-0832">Ubl conjugation</keyword>
<proteinExistence type="evidence at protein level"/>